<proteinExistence type="inferred from homology"/>
<protein>
    <recommendedName>
        <fullName>MICOS complex subunit MIC60</fullName>
    </recommendedName>
    <alternativeName>
        <fullName>Mitofilin</fullName>
    </alternativeName>
</protein>
<name>MIC60_PICST</name>
<accession>A3LQS0</accession>
<comment type="function">
    <text evidence="1">Component of the MICOS complex, a large protein complex of the mitochondrial inner membrane that plays crucial roles in the maintenance of crista junctions, inner membrane architecture, and formation of contact sites to the outer membrane. Plays a role in keeping cristae membranes connected to the inner boundary membrane. Also promotes protein import via the mitochondrial intermembrane space assembly (MIA) pathway (By similarity).</text>
</comment>
<comment type="subunit">
    <text evidence="1">Component of the mitochondrial contact site and cristae organizing system (MICOS) complex.</text>
</comment>
<comment type="subcellular location">
    <subcellularLocation>
        <location evidence="1">Mitochondrion inner membrane</location>
        <topology evidence="1">Single-pass membrane protein</topology>
    </subcellularLocation>
</comment>
<comment type="similarity">
    <text evidence="4">Belongs to the MICOS complex subunit Mic60 family.</text>
</comment>
<organism>
    <name type="scientific">Scheffersomyces stipitis (strain ATCC 58785 / CBS 6054 / NBRC 10063 / NRRL Y-11545)</name>
    <name type="common">Yeast</name>
    <name type="synonym">Pichia stipitis</name>
    <dbReference type="NCBI Taxonomy" id="322104"/>
    <lineage>
        <taxon>Eukaryota</taxon>
        <taxon>Fungi</taxon>
        <taxon>Dikarya</taxon>
        <taxon>Ascomycota</taxon>
        <taxon>Saccharomycotina</taxon>
        <taxon>Pichiomycetes</taxon>
        <taxon>Debaryomycetaceae</taxon>
        <taxon>Scheffersomyces</taxon>
    </lineage>
</organism>
<reference key="1">
    <citation type="journal article" date="2007" name="Nat. Biotechnol.">
        <title>Genome sequence of the lignocellulose-bioconverting and xylose-fermenting yeast Pichia stipitis.</title>
        <authorList>
            <person name="Jeffries T.W."/>
            <person name="Grigoriev I.V."/>
            <person name="Grimwood J."/>
            <person name="Laplaza J.M."/>
            <person name="Aerts A."/>
            <person name="Salamov A."/>
            <person name="Schmutz J."/>
            <person name="Lindquist E."/>
            <person name="Dehal P."/>
            <person name="Shapiro H."/>
            <person name="Jin Y.-S."/>
            <person name="Passoth V."/>
            <person name="Richardson P.M."/>
        </authorList>
    </citation>
    <scope>NUCLEOTIDE SEQUENCE [LARGE SCALE GENOMIC DNA]</scope>
    <source>
        <strain>ATCC 58785 / CBS 6054 / NBRC 10063 / NRRL Y-11545</strain>
    </source>
</reference>
<keyword id="KW-0175">Coiled coil</keyword>
<keyword id="KW-0472">Membrane</keyword>
<keyword id="KW-0496">Mitochondrion</keyword>
<keyword id="KW-0999">Mitochondrion inner membrane</keyword>
<keyword id="KW-1185">Reference proteome</keyword>
<keyword id="KW-0809">Transit peptide</keyword>
<keyword id="KW-0812">Transmembrane</keyword>
<keyword id="KW-1133">Transmembrane helix</keyword>
<sequence>MAVRPLSASARVWSSSVSETGKSSQGQDQKHENYQNHQQSSLAGIVIKSALFATVVYGATMFIATKNDKVMDFVIDQQIPYYEETIDLIENGSYDDLVSAIKAKISSIRLPSKDEITELSHKIEHTSEDLLKETKRKLESARAEFGSHSTAGSGTSASLPANQLQKHPEIEHVKKEVEHLPAIKLNENVVSYVDASVKATIDSFNDLINSIDVSKVTPTDEGLIKTINEKVSELASKVGALSKKFDDELQSKLKVSQTELLSSYTKKELELTENLLHQFNRERAQLESKLNERLKQEIAATKETISQAAVNAVSMVRIEQTKNFEKLVADKINEERNGKLANLEKLNSRLESLEQFAESLESQVVATQQKSVIQKSLSSLKAVLFVSNPEEKPQSIKPYVDDLFESSPDDEVIQLALGELGPLLSKESTQSILTTSQLLTRWEQLVPELRSASLLPPNAGLLGHLASIVFSKFLVSVKGDKPDGKDIESVIGRVEASLVRDELDVAVEEVANLKGWTRKLANDWVIEGRKRLEAEYLVELIDAETRIL</sequence>
<evidence type="ECO:0000250" key="1"/>
<evidence type="ECO:0000255" key="2"/>
<evidence type="ECO:0000256" key="3">
    <source>
        <dbReference type="SAM" id="MobiDB-lite"/>
    </source>
</evidence>
<evidence type="ECO:0000305" key="4"/>
<gene>
    <name type="primary">MIC60</name>
    <name type="ORF">PICST_76840</name>
</gene>
<feature type="transit peptide" description="Mitochondrion" evidence="2">
    <location>
        <begin position="1"/>
        <end position="13"/>
    </location>
</feature>
<feature type="chain" id="PRO_0000406671" description="MICOS complex subunit MIC60">
    <location>
        <begin position="14"/>
        <end position="548"/>
    </location>
</feature>
<feature type="topological domain" description="Mitochondrial matrix" evidence="2">
    <location>
        <begin position="14"/>
        <end position="42"/>
    </location>
</feature>
<feature type="transmembrane region" description="Helical" evidence="2">
    <location>
        <begin position="43"/>
        <end position="63"/>
    </location>
</feature>
<feature type="topological domain" description="Mitochondrial intermembrane" evidence="2">
    <location>
        <begin position="64"/>
        <end position="548"/>
    </location>
</feature>
<feature type="region of interest" description="Disordered" evidence="3">
    <location>
        <begin position="14"/>
        <end position="35"/>
    </location>
</feature>
<feature type="coiled-coil region" evidence="2">
    <location>
        <begin position="265"/>
        <end position="370"/>
    </location>
</feature>
<dbReference type="EMBL" id="CP000497">
    <property type="protein sequence ID" value="ABN65250.2"/>
    <property type="molecule type" value="Genomic_DNA"/>
</dbReference>
<dbReference type="SMR" id="A3LQS0"/>
<dbReference type="FunCoup" id="A3LQS0">
    <property type="interactions" value="197"/>
</dbReference>
<dbReference type="STRING" id="322104.A3LQS0"/>
<dbReference type="KEGG" id="pic:PICST_76840"/>
<dbReference type="eggNOG" id="KOG1854">
    <property type="taxonomic scope" value="Eukaryota"/>
</dbReference>
<dbReference type="HOGENOM" id="CLU_008024_2_0_1"/>
<dbReference type="InParanoid" id="A3LQS0"/>
<dbReference type="OMA" id="RLDHQMQ"/>
<dbReference type="OrthoDB" id="10261039at2759"/>
<dbReference type="Proteomes" id="UP000002258">
    <property type="component" value="Chromosome 3"/>
</dbReference>
<dbReference type="GO" id="GO:0061617">
    <property type="term" value="C:MICOS complex"/>
    <property type="evidence" value="ECO:0007669"/>
    <property type="project" value="TreeGrafter"/>
</dbReference>
<dbReference type="GO" id="GO:0042407">
    <property type="term" value="P:cristae formation"/>
    <property type="evidence" value="ECO:0007669"/>
    <property type="project" value="TreeGrafter"/>
</dbReference>
<dbReference type="InterPro" id="IPR019133">
    <property type="entry name" value="MIC60"/>
</dbReference>
<dbReference type="PANTHER" id="PTHR15415:SF7">
    <property type="entry name" value="MICOS COMPLEX SUBUNIT MIC60"/>
    <property type="match status" value="1"/>
</dbReference>
<dbReference type="PANTHER" id="PTHR15415">
    <property type="entry name" value="MITOFILIN"/>
    <property type="match status" value="1"/>
</dbReference>
<dbReference type="Pfam" id="PF09731">
    <property type="entry name" value="Mitofilin"/>
    <property type="match status" value="1"/>
</dbReference>